<evidence type="ECO:0000250" key="1"/>
<evidence type="ECO:0000250" key="2">
    <source>
        <dbReference type="UniProtKB" id="B9W5G6"/>
    </source>
</evidence>
<evidence type="ECO:0000250" key="3">
    <source>
        <dbReference type="UniProtKB" id="P07845"/>
    </source>
</evidence>
<evidence type="ECO:0000250" key="4">
    <source>
        <dbReference type="UniProtKB" id="P61914"/>
    </source>
</evidence>
<evidence type="ECO:0000255" key="5"/>
<evidence type="ECO:0000269" key="6">
    <source>
    </source>
</evidence>
<evidence type="ECO:0000303" key="7">
    <source>
    </source>
</evidence>
<evidence type="ECO:0000303" key="8">
    <source>
    </source>
</evidence>
<evidence type="ECO:0000305" key="9"/>
<evidence type="ECO:0000305" key="10">
    <source>
    </source>
</evidence>
<name>ACT2A_HETMG</name>
<feature type="signal peptide" evidence="5">
    <location>
        <begin position="1"/>
        <end position="19"/>
    </location>
</feature>
<feature type="propeptide" id="PRO_0000034840" evidence="6">
    <location>
        <begin position="20"/>
        <end position="34"/>
    </location>
</feature>
<feature type="chain" id="PRO_0000034841" description="DELTA-stichotoxin-Hmg2a">
    <location>
        <begin position="35"/>
        <end position="211"/>
    </location>
</feature>
<feature type="region of interest" description="Plays an important role in the hemolytic activity" evidence="3">
    <location>
        <begin position="37"/>
        <end position="46"/>
    </location>
</feature>
<feature type="region of interest" description="N-terminal region" evidence="4">
    <location>
        <begin position="45"/>
        <end position="64"/>
    </location>
</feature>
<feature type="region of interest" description="Trp-rich region, which is important for the binding to lipid membrane" evidence="4">
    <location>
        <begin position="139"/>
        <end position="154"/>
    </location>
</feature>
<feature type="short sequence motif" description="Cell attachment site, crucial for protein stability" evidence="3 5">
    <location>
        <begin position="177"/>
        <end position="179"/>
    </location>
</feature>
<feature type="binding site" evidence="3">
    <location>
        <position position="88"/>
    </location>
    <ligand>
        <name>phosphocholine</name>
        <dbReference type="ChEBI" id="CHEBI:295975"/>
    </ligand>
</feature>
<feature type="binding site" evidence="3">
    <location>
        <position position="121"/>
    </location>
    <ligand>
        <name>phosphocholine</name>
        <dbReference type="ChEBI" id="CHEBI:295975"/>
    </ligand>
</feature>
<feature type="binding site" evidence="3">
    <location>
        <position position="139"/>
    </location>
    <ligand>
        <name>phosphocholine</name>
        <dbReference type="ChEBI" id="CHEBI:295975"/>
    </ligand>
</feature>
<feature type="binding site" evidence="3">
    <location>
        <position position="141"/>
    </location>
    <ligand>
        <name>phosphocholine</name>
        <dbReference type="ChEBI" id="CHEBI:295975"/>
    </ligand>
</feature>
<feature type="binding site" evidence="3">
    <location>
        <position position="167"/>
    </location>
    <ligand>
        <name>phosphocholine</name>
        <dbReference type="ChEBI" id="CHEBI:295975"/>
    </ligand>
</feature>
<feature type="binding site" evidence="3">
    <location>
        <position position="171"/>
    </location>
    <ligand>
        <name>phosphocholine</name>
        <dbReference type="ChEBI" id="CHEBI:295975"/>
    </ligand>
</feature>
<feature type="binding site" evidence="3">
    <location>
        <position position="172"/>
    </location>
    <ligand>
        <name>phosphocholine</name>
        <dbReference type="ChEBI" id="CHEBI:295975"/>
    </ligand>
</feature>
<feature type="site" description="Important in the initial contact with the lipid membrane" evidence="4">
    <location>
        <position position="147"/>
    </location>
</feature>
<feature type="site" description="Interacts with the lipid membrane" evidence="1">
    <location>
        <position position="177"/>
    </location>
</feature>
<dbReference type="EMBL" id="AF170706">
    <property type="protein sequence ID" value="AAF06362.1"/>
    <property type="molecule type" value="mRNA"/>
</dbReference>
<dbReference type="SMR" id="Q9U6X1"/>
<dbReference type="GO" id="GO:0005576">
    <property type="term" value="C:extracellular region"/>
    <property type="evidence" value="ECO:0007669"/>
    <property type="project" value="UniProtKB-SubCell"/>
</dbReference>
<dbReference type="GO" id="GO:0042151">
    <property type="term" value="C:nematocyst"/>
    <property type="evidence" value="ECO:0007669"/>
    <property type="project" value="UniProtKB-SubCell"/>
</dbReference>
<dbReference type="GO" id="GO:0044218">
    <property type="term" value="C:other organism cell membrane"/>
    <property type="evidence" value="ECO:0007669"/>
    <property type="project" value="UniProtKB-KW"/>
</dbReference>
<dbReference type="GO" id="GO:0046930">
    <property type="term" value="C:pore complex"/>
    <property type="evidence" value="ECO:0007669"/>
    <property type="project" value="InterPro"/>
</dbReference>
<dbReference type="GO" id="GO:0015267">
    <property type="term" value="F:channel activity"/>
    <property type="evidence" value="ECO:0007669"/>
    <property type="project" value="InterPro"/>
</dbReference>
<dbReference type="GO" id="GO:0090729">
    <property type="term" value="F:toxin activity"/>
    <property type="evidence" value="ECO:0007669"/>
    <property type="project" value="UniProtKB-KW"/>
</dbReference>
<dbReference type="GO" id="GO:0051715">
    <property type="term" value="P:cytolysis in another organism"/>
    <property type="evidence" value="ECO:0007669"/>
    <property type="project" value="InterPro"/>
</dbReference>
<dbReference type="GO" id="GO:0006812">
    <property type="term" value="P:monoatomic cation transport"/>
    <property type="evidence" value="ECO:0007669"/>
    <property type="project" value="InterPro"/>
</dbReference>
<dbReference type="GO" id="GO:0046931">
    <property type="term" value="P:pore complex assembly"/>
    <property type="evidence" value="ECO:0007669"/>
    <property type="project" value="InterPro"/>
</dbReference>
<dbReference type="FunFam" id="2.60.270.20:FF:000001">
    <property type="entry name" value="DELTA-actitoxin-Afr1a"/>
    <property type="match status" value="1"/>
</dbReference>
<dbReference type="Gene3D" id="2.60.270.20">
    <property type="entry name" value="Cytolysin/lectin"/>
    <property type="match status" value="1"/>
</dbReference>
<dbReference type="InterPro" id="IPR050677">
    <property type="entry name" value="Actinoporin_PFT"/>
</dbReference>
<dbReference type="InterPro" id="IPR009104">
    <property type="entry name" value="Anemon_actinoporin-like"/>
</dbReference>
<dbReference type="InterPro" id="IPR015926">
    <property type="entry name" value="Cytolysin/lectin"/>
</dbReference>
<dbReference type="PANTHER" id="PTHR40388">
    <property type="entry name" value="BRYOPORIN"/>
    <property type="match status" value="1"/>
</dbReference>
<dbReference type="PANTHER" id="PTHR40388:SF1">
    <property type="entry name" value="BRYOPORIN"/>
    <property type="match status" value="1"/>
</dbReference>
<dbReference type="Pfam" id="PF06369">
    <property type="entry name" value="Anemone_cytotox"/>
    <property type="match status" value="1"/>
</dbReference>
<dbReference type="SUPFAM" id="SSF63724">
    <property type="entry name" value="Cytolysin/lectin"/>
    <property type="match status" value="1"/>
</dbReference>
<organism>
    <name type="scientific">Heteractis magnifica</name>
    <name type="common">Magnificent sea anemone</name>
    <name type="synonym">Radianthus magnifica</name>
    <dbReference type="NCBI Taxonomy" id="38281"/>
    <lineage>
        <taxon>Eukaryota</taxon>
        <taxon>Metazoa</taxon>
        <taxon>Cnidaria</taxon>
        <taxon>Anthozoa</taxon>
        <taxon>Hexacorallia</taxon>
        <taxon>Actiniaria</taxon>
        <taxon>Stichodactylidae</taxon>
        <taxon>Heteractis</taxon>
    </lineage>
</organism>
<keyword id="KW-0165">Cleavage on pair of basic residues</keyword>
<keyword id="KW-0204">Cytolysis</keyword>
<keyword id="KW-0903">Direct protein sequencing</keyword>
<keyword id="KW-0406">Ion transport</keyword>
<keyword id="KW-0472">Membrane</keyword>
<keyword id="KW-0166">Nematocyst</keyword>
<keyword id="KW-0964">Secreted</keyword>
<keyword id="KW-0732">Signal</keyword>
<keyword id="KW-1052">Target cell membrane</keyword>
<keyword id="KW-1053">Target membrane</keyword>
<keyword id="KW-0800">Toxin</keyword>
<keyword id="KW-0812">Transmembrane</keyword>
<keyword id="KW-0813">Transport</keyword>
<comment type="function">
    <text evidence="6">Pore-forming protein that forms cations-selective hydrophilic pores of around 1 nm and causes cardiac stimulation and cytolysis. Pore formation is a multi-step process that involves specific recognition of membrane sphingomyelin (but neither cholesterol nor phosphatidylcholine) using aromatic rich region and adjacent phosphocholine (POC) binding site, firm binding to the membrane (mainly driven by hydrophobic interactions) accompanied by the transfer of the N-terminal region to the lipid-water interface and finally pore formation after oligomerization of monomers.</text>
</comment>
<comment type="subunit">
    <text evidence="2">Octamer or nonamer in membranes. Monomer in the soluble state.</text>
</comment>
<comment type="subcellular location">
    <subcellularLocation>
        <location evidence="2">Secreted</location>
    </subcellularLocation>
    <subcellularLocation>
        <location evidence="3">Nematocyst</location>
    </subcellularLocation>
    <subcellularLocation>
        <location evidence="2">Target cell membrane</location>
    </subcellularLocation>
    <text evidence="2">Forms an alpha-helical membrane channel in the prey.</text>
</comment>
<comment type="domain">
    <text evidence="4">Composed of a long N-terminal alpha-helix and a core region rich in beta-sheet structures. Before the pore formation, the alpha-helix binds the lipid membrane, partitions into the lipid-water interface and stabilizes the monomeric molecule on the membrane. Finally, it traverses the bilayer, thus forming the transmembrane pore.</text>
</comment>
<comment type="miscellaneous">
    <text evidence="9">A synonymy between H.magnifica and R.crispa is controversial.</text>
</comment>
<comment type="similarity">
    <text evidence="9">Belongs to the actinoporin family. Sea anemone subfamily.</text>
</comment>
<reference key="1">
    <citation type="journal article" date="2000" name="Biochim. Biophys. Acta">
        <title>A new cytolysin from the sea anemone, Heteractis magnifica: isolation, cDNA cloning and functional expression.</title>
        <authorList>
            <person name="Wang Y."/>
            <person name="Chua K.L."/>
            <person name="Khoo H.E."/>
        </authorList>
    </citation>
    <scope>NUCLEOTIDE SEQUENCE [MRNA]</scope>
    <scope>PROTEIN SEQUENCE OF 35-75</scope>
    <scope>FUNCTION</scope>
</reference>
<reference key="2">
    <citation type="journal article" date="2009" name="Toxicon">
        <title>Molecular mechanism of pore formation by actinoporins.</title>
        <authorList>
            <person name="Kristan K.C."/>
            <person name="Viero G."/>
            <person name="Dalla Serra M."/>
            <person name="Macek P."/>
            <person name="Anderluh G."/>
        </authorList>
    </citation>
    <scope>REVIEW</scope>
</reference>
<reference key="3">
    <citation type="journal article" date="2012" name="Toxicon">
        <title>Development of a rational nomenclature for naming peptide and protein toxins from sea anemones.</title>
        <authorList>
            <person name="Oliveira J.S."/>
            <person name="Fuentes-Silva D."/>
            <person name="King G.F."/>
        </authorList>
    </citation>
    <scope>NOMENCLATURE</scope>
</reference>
<proteinExistence type="evidence at protein level"/>
<protein>
    <recommendedName>
        <fullName evidence="8">DELTA-stichotoxin-Hmg2a</fullName>
        <shortName evidence="8">DELTA-SHTX-Hmg2a</shortName>
    </recommendedName>
    <alternativeName>
        <fullName>Cytolysin III</fullName>
    </alternativeName>
    <alternativeName>
        <fullName>Cytolysin-3</fullName>
    </alternativeName>
    <alternativeName>
        <fullName evidence="7">HMg III</fullName>
        <shortName evidence="7">HMgIII</shortName>
    </alternativeName>
    <alternativeName>
        <fullName evidence="10">Magnificalysin III</fullName>
    </alternativeName>
</protein>
<sequence length="211" mass="23411">MNRLIVLFLIVTMICATIAVPSREELEDQKEYKRSAALAGTIIEGASLGFQILDKVLGELGKVSRKIAVGVDNESGGSWTALNAYFRSGTTDVILPEFVPNQKALLYSGRKDTGPVATGAVAAFAYYMSNGHTLGVMFSVPFDYNFYSNWWDVKVYSGKRRADQGMYEDMYYGNPYRGDNGWHQKNLGYGLRMKGIMTSAGEAILQIRISR</sequence>
<accession>Q9U6X1</accession>